<keyword id="KW-0002">3D-structure</keyword>
<keyword id="KW-0386">Hypusine biosynthesis</keyword>
<keyword id="KW-0520">NAD</keyword>
<keyword id="KW-0808">Transferase</keyword>
<reference key="1">
    <citation type="journal article" date="2009" name="Proc. Natl. Acad. Sci. U.S.A.">
        <title>Biogeography of the Sulfolobus islandicus pan-genome.</title>
        <authorList>
            <person name="Reno M.L."/>
            <person name="Held N.L."/>
            <person name="Fields C.J."/>
            <person name="Burke P.V."/>
            <person name="Whitaker R.J."/>
        </authorList>
    </citation>
    <scope>NUCLEOTIDE SEQUENCE [LARGE SCALE GENOMIC DNA]</scope>
    <source>
        <strain>M.16.4 / Kamchatka #3</strain>
    </source>
</reference>
<gene>
    <name evidence="1" type="primary">dys</name>
    <name type="ordered locus">M164_1240</name>
</gene>
<proteinExistence type="evidence at protein level"/>
<organism>
    <name type="scientific">Saccharolobus islandicus (strain M.16.4 / Kamchatka #3)</name>
    <name type="common">Sulfolobus islandicus</name>
    <dbReference type="NCBI Taxonomy" id="426118"/>
    <lineage>
        <taxon>Archaea</taxon>
        <taxon>Thermoproteota</taxon>
        <taxon>Thermoprotei</taxon>
        <taxon>Sulfolobales</taxon>
        <taxon>Sulfolobaceae</taxon>
        <taxon>Saccharolobus</taxon>
    </lineage>
</organism>
<name>DHYS_SACI6</name>
<evidence type="ECO:0000255" key="1">
    <source>
        <dbReference type="HAMAP-Rule" id="MF_00153"/>
    </source>
</evidence>
<evidence type="ECO:0007829" key="2">
    <source>
        <dbReference type="PDB" id="8PUT"/>
    </source>
</evidence>
<sequence length="312" mass="35015">MINREDLLKNPVEDIALRDLEKYSDIVNVFDKIYGFSSEGIVRGSKILKEMIKDADLRFLSFTANLVSTGLRGLFADLVKRGYFNIIVTTGGTIDHDLARSFGGVYYKGSFDIDDAMLKDLEIHRLGNVLVPFESYGKVIEEIVRKFLPEIAKDKKEIPAYELLWEFGKRISDSNSILRAAYEKKVPVIVPGIVDGSFGTNLFIQSQFLNFKINLFEDMRLIKDLVFSCKKSGALIIGGGISKHHTIWWNQFKDGLDYAVYVTTAQEYDGSLSGAKPREAISWNKIRPNAKHATIYGDATIIVPILAASLLS</sequence>
<feature type="chain" id="PRO_1000203445" description="Probable deoxyhypusine synthase">
    <location>
        <begin position="1"/>
        <end position="312"/>
    </location>
</feature>
<feature type="active site" description="Nucleophile" evidence="1">
    <location>
        <position position="285"/>
    </location>
</feature>
<feature type="helix" evidence="2">
    <location>
        <begin position="4"/>
        <end position="7"/>
    </location>
</feature>
<feature type="helix" evidence="2">
    <location>
        <begin position="17"/>
        <end position="23"/>
    </location>
</feature>
<feature type="turn" evidence="2">
    <location>
        <begin position="24"/>
        <end position="26"/>
    </location>
</feature>
<feature type="helix" evidence="2">
    <location>
        <begin position="27"/>
        <end position="33"/>
    </location>
</feature>
<feature type="helix" evidence="2">
    <location>
        <begin position="38"/>
        <end position="54"/>
    </location>
</feature>
<feature type="strand" evidence="2">
    <location>
        <begin position="56"/>
        <end position="62"/>
    </location>
</feature>
<feature type="helix" evidence="2">
    <location>
        <begin position="64"/>
        <end position="68"/>
    </location>
</feature>
<feature type="helix" evidence="2">
    <location>
        <begin position="72"/>
        <end position="80"/>
    </location>
</feature>
<feature type="strand" evidence="2">
    <location>
        <begin position="85"/>
        <end position="88"/>
    </location>
</feature>
<feature type="helix" evidence="2">
    <location>
        <begin position="91"/>
        <end position="101"/>
    </location>
</feature>
<feature type="helix" evidence="2">
    <location>
        <begin position="115"/>
        <end position="120"/>
    </location>
</feature>
<feature type="strand" evidence="2">
    <location>
        <begin position="123"/>
        <end position="126"/>
    </location>
</feature>
<feature type="strand" evidence="2">
    <location>
        <begin position="129"/>
        <end position="132"/>
    </location>
</feature>
<feature type="helix" evidence="2">
    <location>
        <begin position="133"/>
        <end position="154"/>
    </location>
</feature>
<feature type="strand" evidence="2">
    <location>
        <begin position="156"/>
        <end position="158"/>
    </location>
</feature>
<feature type="helix" evidence="2">
    <location>
        <begin position="160"/>
        <end position="168"/>
    </location>
</feature>
<feature type="helix" evidence="2">
    <location>
        <begin position="177"/>
        <end position="184"/>
    </location>
</feature>
<feature type="turn" evidence="2">
    <location>
        <begin position="191"/>
        <end position="194"/>
    </location>
</feature>
<feature type="helix" evidence="2">
    <location>
        <begin position="197"/>
        <end position="206"/>
    </location>
</feature>
<feature type="helix" evidence="2">
    <location>
        <begin position="215"/>
        <end position="228"/>
    </location>
</feature>
<feature type="strand" evidence="2">
    <location>
        <begin position="232"/>
        <end position="238"/>
    </location>
</feature>
<feature type="helix" evidence="2">
    <location>
        <begin position="240"/>
        <end position="250"/>
    </location>
</feature>
<feature type="helix" evidence="2">
    <location>
        <begin position="251"/>
        <end position="253"/>
    </location>
</feature>
<feature type="strand" evidence="2">
    <location>
        <begin position="255"/>
        <end position="263"/>
    </location>
</feature>
<feature type="turn" evidence="2">
    <location>
        <begin position="279"/>
        <end position="284"/>
    </location>
</feature>
<feature type="strand" evidence="2">
    <location>
        <begin position="286"/>
        <end position="297"/>
    </location>
</feature>
<feature type="helix" evidence="2">
    <location>
        <begin position="299"/>
        <end position="309"/>
    </location>
</feature>
<protein>
    <recommendedName>
        <fullName evidence="1">Probable deoxyhypusine synthase</fullName>
        <shortName evidence="1">DHS</shortName>
        <ecNumber evidence="1">2.5.1.46</ecNumber>
    </recommendedName>
</protein>
<accession>C4KGY0</accession>
<dbReference type="EC" id="2.5.1.46" evidence="1"/>
<dbReference type="EMBL" id="CP001402">
    <property type="protein sequence ID" value="ACR41844.1"/>
    <property type="molecule type" value="Genomic_DNA"/>
</dbReference>
<dbReference type="RefSeq" id="WP_012735927.1">
    <property type="nucleotide sequence ID" value="NC_012726.1"/>
</dbReference>
<dbReference type="PDB" id="8PUT">
    <property type="method" value="X-ray"/>
    <property type="resolution" value="2.00 A"/>
    <property type="chains" value="A/B/C/D=1-312"/>
</dbReference>
<dbReference type="PDBsum" id="8PUT"/>
<dbReference type="SMR" id="C4KGY0"/>
<dbReference type="GeneID" id="84061571"/>
<dbReference type="KEGG" id="sid:M164_1240"/>
<dbReference type="HOGENOM" id="CLU_039781_1_0_2"/>
<dbReference type="UniPathway" id="UPA00354"/>
<dbReference type="Proteomes" id="UP000001479">
    <property type="component" value="Chromosome"/>
</dbReference>
<dbReference type="GO" id="GO:0005737">
    <property type="term" value="C:cytoplasm"/>
    <property type="evidence" value="ECO:0007669"/>
    <property type="project" value="TreeGrafter"/>
</dbReference>
<dbReference type="GO" id="GO:0034038">
    <property type="term" value="F:deoxyhypusine synthase activity"/>
    <property type="evidence" value="ECO:0007669"/>
    <property type="project" value="UniProtKB-UniRule"/>
</dbReference>
<dbReference type="FunFam" id="3.40.910.10:FF:000007">
    <property type="entry name" value="Probable deoxyhypusine synthase"/>
    <property type="match status" value="1"/>
</dbReference>
<dbReference type="Gene3D" id="3.40.910.10">
    <property type="entry name" value="Deoxyhypusine synthase"/>
    <property type="match status" value="1"/>
</dbReference>
<dbReference type="HAMAP" id="MF_00153">
    <property type="entry name" value="DHS"/>
    <property type="match status" value="1"/>
</dbReference>
<dbReference type="InterPro" id="IPR022899">
    <property type="entry name" value="Deoxyhypus_synthase_arc"/>
</dbReference>
<dbReference type="InterPro" id="IPR002773">
    <property type="entry name" value="Deoxyhypusine_synthase"/>
</dbReference>
<dbReference type="InterPro" id="IPR036982">
    <property type="entry name" value="Deoxyhypusine_synthase_sf"/>
</dbReference>
<dbReference type="InterPro" id="IPR029035">
    <property type="entry name" value="DHS-like_NAD/FAD-binding_dom"/>
</dbReference>
<dbReference type="NCBIfam" id="NF002294">
    <property type="entry name" value="PRK01221.1"/>
    <property type="match status" value="1"/>
</dbReference>
<dbReference type="PANTHER" id="PTHR11703">
    <property type="entry name" value="DEOXYHYPUSINE SYNTHASE"/>
    <property type="match status" value="1"/>
</dbReference>
<dbReference type="PANTHER" id="PTHR11703:SF0">
    <property type="entry name" value="DEOXYHYPUSINE SYNTHASE"/>
    <property type="match status" value="1"/>
</dbReference>
<dbReference type="Pfam" id="PF01916">
    <property type="entry name" value="DS"/>
    <property type="match status" value="1"/>
</dbReference>
<dbReference type="SUPFAM" id="SSF52467">
    <property type="entry name" value="DHS-like NAD/FAD-binding domain"/>
    <property type="match status" value="1"/>
</dbReference>
<comment type="function">
    <text evidence="1">Catalyzes the NAD-dependent oxidative cleavage of spermidine and the subsequent transfer of the butylamine moiety of spermidine to the epsilon-amino group of a specific lysine residue of the eIF-5A precursor protein to form the intermediate deoxyhypusine residue.</text>
</comment>
<comment type="catalytic activity">
    <reaction evidence="1">
        <text>[eIF5A protein]-L-lysine + spermidine = [eIF5A protein]-deoxyhypusine + propane-1,3-diamine</text>
        <dbReference type="Rhea" id="RHEA:33299"/>
        <dbReference type="Rhea" id="RHEA-COMP:10143"/>
        <dbReference type="Rhea" id="RHEA-COMP:10144"/>
        <dbReference type="ChEBI" id="CHEBI:29969"/>
        <dbReference type="ChEBI" id="CHEBI:57484"/>
        <dbReference type="ChEBI" id="CHEBI:57834"/>
        <dbReference type="ChEBI" id="CHEBI:82657"/>
        <dbReference type="EC" id="2.5.1.46"/>
    </reaction>
</comment>
<comment type="cofactor">
    <cofactor evidence="1">
        <name>NAD(+)</name>
        <dbReference type="ChEBI" id="CHEBI:57540"/>
    </cofactor>
</comment>
<comment type="pathway">
    <text evidence="1">Protein modification; eIF5A hypusination.</text>
</comment>
<comment type="similarity">
    <text evidence="1">Belongs to the deoxyhypusine synthase family.</text>
</comment>